<keyword id="KW-0963">Cytoplasm</keyword>
<keyword id="KW-0251">Elongation factor</keyword>
<keyword id="KW-0342">GTP-binding</keyword>
<keyword id="KW-0547">Nucleotide-binding</keyword>
<keyword id="KW-0648">Protein biosynthesis</keyword>
<name>EFG_SALPK</name>
<evidence type="ECO:0000255" key="1">
    <source>
        <dbReference type="HAMAP-Rule" id="MF_00054"/>
    </source>
</evidence>
<dbReference type="EMBL" id="FM200053">
    <property type="protein sequence ID" value="CAR61342.1"/>
    <property type="molecule type" value="Genomic_DNA"/>
</dbReference>
<dbReference type="RefSeq" id="WP_000124693.1">
    <property type="nucleotide sequence ID" value="NC_011147.1"/>
</dbReference>
<dbReference type="SMR" id="B5BGZ2"/>
<dbReference type="KEGG" id="sek:SSPA3091"/>
<dbReference type="HOGENOM" id="CLU_002794_4_1_6"/>
<dbReference type="Proteomes" id="UP000001869">
    <property type="component" value="Chromosome"/>
</dbReference>
<dbReference type="GO" id="GO:0005737">
    <property type="term" value="C:cytoplasm"/>
    <property type="evidence" value="ECO:0007669"/>
    <property type="project" value="UniProtKB-SubCell"/>
</dbReference>
<dbReference type="GO" id="GO:0005525">
    <property type="term" value="F:GTP binding"/>
    <property type="evidence" value="ECO:0007669"/>
    <property type="project" value="UniProtKB-UniRule"/>
</dbReference>
<dbReference type="GO" id="GO:0003924">
    <property type="term" value="F:GTPase activity"/>
    <property type="evidence" value="ECO:0007669"/>
    <property type="project" value="InterPro"/>
</dbReference>
<dbReference type="GO" id="GO:0097216">
    <property type="term" value="F:guanosine tetraphosphate binding"/>
    <property type="evidence" value="ECO:0007669"/>
    <property type="project" value="UniProtKB-ARBA"/>
</dbReference>
<dbReference type="GO" id="GO:0003746">
    <property type="term" value="F:translation elongation factor activity"/>
    <property type="evidence" value="ECO:0007669"/>
    <property type="project" value="UniProtKB-UniRule"/>
</dbReference>
<dbReference type="GO" id="GO:0032790">
    <property type="term" value="P:ribosome disassembly"/>
    <property type="evidence" value="ECO:0007669"/>
    <property type="project" value="TreeGrafter"/>
</dbReference>
<dbReference type="CDD" id="cd01886">
    <property type="entry name" value="EF-G"/>
    <property type="match status" value="1"/>
</dbReference>
<dbReference type="CDD" id="cd16262">
    <property type="entry name" value="EFG_III"/>
    <property type="match status" value="1"/>
</dbReference>
<dbReference type="CDD" id="cd01434">
    <property type="entry name" value="EFG_mtEFG1_IV"/>
    <property type="match status" value="1"/>
</dbReference>
<dbReference type="CDD" id="cd03713">
    <property type="entry name" value="EFG_mtEFG_C"/>
    <property type="match status" value="1"/>
</dbReference>
<dbReference type="CDD" id="cd04088">
    <property type="entry name" value="EFG_mtEFG_II"/>
    <property type="match status" value="1"/>
</dbReference>
<dbReference type="FunFam" id="2.40.30.10:FF:000006">
    <property type="entry name" value="Elongation factor G"/>
    <property type="match status" value="1"/>
</dbReference>
<dbReference type="FunFam" id="3.30.230.10:FF:000003">
    <property type="entry name" value="Elongation factor G"/>
    <property type="match status" value="1"/>
</dbReference>
<dbReference type="FunFam" id="3.30.70.240:FF:000001">
    <property type="entry name" value="Elongation factor G"/>
    <property type="match status" value="1"/>
</dbReference>
<dbReference type="FunFam" id="3.30.70.870:FF:000001">
    <property type="entry name" value="Elongation factor G"/>
    <property type="match status" value="1"/>
</dbReference>
<dbReference type="FunFam" id="3.40.50.300:FF:000029">
    <property type="entry name" value="Elongation factor G"/>
    <property type="match status" value="1"/>
</dbReference>
<dbReference type="Gene3D" id="3.30.230.10">
    <property type="match status" value="1"/>
</dbReference>
<dbReference type="Gene3D" id="3.30.70.240">
    <property type="match status" value="1"/>
</dbReference>
<dbReference type="Gene3D" id="3.30.70.870">
    <property type="entry name" value="Elongation Factor G (Translational Gtpase), domain 3"/>
    <property type="match status" value="1"/>
</dbReference>
<dbReference type="Gene3D" id="3.40.50.300">
    <property type="entry name" value="P-loop containing nucleotide triphosphate hydrolases"/>
    <property type="match status" value="1"/>
</dbReference>
<dbReference type="Gene3D" id="2.40.30.10">
    <property type="entry name" value="Translation factors"/>
    <property type="match status" value="1"/>
</dbReference>
<dbReference type="HAMAP" id="MF_00054_B">
    <property type="entry name" value="EF_G_EF_2_B"/>
    <property type="match status" value="1"/>
</dbReference>
<dbReference type="InterPro" id="IPR041095">
    <property type="entry name" value="EFG_II"/>
</dbReference>
<dbReference type="InterPro" id="IPR009022">
    <property type="entry name" value="EFG_III"/>
</dbReference>
<dbReference type="InterPro" id="IPR035647">
    <property type="entry name" value="EFG_III/V"/>
</dbReference>
<dbReference type="InterPro" id="IPR047872">
    <property type="entry name" value="EFG_IV"/>
</dbReference>
<dbReference type="InterPro" id="IPR035649">
    <property type="entry name" value="EFG_V"/>
</dbReference>
<dbReference type="InterPro" id="IPR000640">
    <property type="entry name" value="EFG_V-like"/>
</dbReference>
<dbReference type="InterPro" id="IPR004161">
    <property type="entry name" value="EFTu-like_2"/>
</dbReference>
<dbReference type="InterPro" id="IPR031157">
    <property type="entry name" value="G_TR_CS"/>
</dbReference>
<dbReference type="InterPro" id="IPR027417">
    <property type="entry name" value="P-loop_NTPase"/>
</dbReference>
<dbReference type="InterPro" id="IPR020568">
    <property type="entry name" value="Ribosomal_Su5_D2-typ_SF"/>
</dbReference>
<dbReference type="InterPro" id="IPR014721">
    <property type="entry name" value="Ribsml_uS5_D2-typ_fold_subgr"/>
</dbReference>
<dbReference type="InterPro" id="IPR005225">
    <property type="entry name" value="Small_GTP-bd"/>
</dbReference>
<dbReference type="InterPro" id="IPR000795">
    <property type="entry name" value="T_Tr_GTP-bd_dom"/>
</dbReference>
<dbReference type="InterPro" id="IPR009000">
    <property type="entry name" value="Transl_B-barrel_sf"/>
</dbReference>
<dbReference type="InterPro" id="IPR004540">
    <property type="entry name" value="Transl_elong_EFG/EF2"/>
</dbReference>
<dbReference type="InterPro" id="IPR005517">
    <property type="entry name" value="Transl_elong_EFG/EF2_IV"/>
</dbReference>
<dbReference type="NCBIfam" id="TIGR00484">
    <property type="entry name" value="EF-G"/>
    <property type="match status" value="1"/>
</dbReference>
<dbReference type="NCBIfam" id="NF009381">
    <property type="entry name" value="PRK12740.1-5"/>
    <property type="match status" value="1"/>
</dbReference>
<dbReference type="NCBIfam" id="TIGR00231">
    <property type="entry name" value="small_GTP"/>
    <property type="match status" value="1"/>
</dbReference>
<dbReference type="PANTHER" id="PTHR43261:SF1">
    <property type="entry name" value="RIBOSOME-RELEASING FACTOR 2, MITOCHONDRIAL"/>
    <property type="match status" value="1"/>
</dbReference>
<dbReference type="PANTHER" id="PTHR43261">
    <property type="entry name" value="TRANSLATION ELONGATION FACTOR G-RELATED"/>
    <property type="match status" value="1"/>
</dbReference>
<dbReference type="Pfam" id="PF00679">
    <property type="entry name" value="EFG_C"/>
    <property type="match status" value="1"/>
</dbReference>
<dbReference type="Pfam" id="PF14492">
    <property type="entry name" value="EFG_III"/>
    <property type="match status" value="1"/>
</dbReference>
<dbReference type="Pfam" id="PF03764">
    <property type="entry name" value="EFG_IV"/>
    <property type="match status" value="1"/>
</dbReference>
<dbReference type="Pfam" id="PF00009">
    <property type="entry name" value="GTP_EFTU"/>
    <property type="match status" value="1"/>
</dbReference>
<dbReference type="Pfam" id="PF03144">
    <property type="entry name" value="GTP_EFTU_D2"/>
    <property type="match status" value="1"/>
</dbReference>
<dbReference type="PRINTS" id="PR00315">
    <property type="entry name" value="ELONGATNFCT"/>
</dbReference>
<dbReference type="SMART" id="SM00838">
    <property type="entry name" value="EFG_C"/>
    <property type="match status" value="1"/>
</dbReference>
<dbReference type="SMART" id="SM00889">
    <property type="entry name" value="EFG_IV"/>
    <property type="match status" value="1"/>
</dbReference>
<dbReference type="SUPFAM" id="SSF54980">
    <property type="entry name" value="EF-G C-terminal domain-like"/>
    <property type="match status" value="2"/>
</dbReference>
<dbReference type="SUPFAM" id="SSF52540">
    <property type="entry name" value="P-loop containing nucleoside triphosphate hydrolases"/>
    <property type="match status" value="1"/>
</dbReference>
<dbReference type="SUPFAM" id="SSF54211">
    <property type="entry name" value="Ribosomal protein S5 domain 2-like"/>
    <property type="match status" value="1"/>
</dbReference>
<dbReference type="SUPFAM" id="SSF50447">
    <property type="entry name" value="Translation proteins"/>
    <property type="match status" value="1"/>
</dbReference>
<dbReference type="PROSITE" id="PS00301">
    <property type="entry name" value="G_TR_1"/>
    <property type="match status" value="1"/>
</dbReference>
<dbReference type="PROSITE" id="PS51722">
    <property type="entry name" value="G_TR_2"/>
    <property type="match status" value="1"/>
</dbReference>
<sequence length="704" mass="77599">MARTTPIARYRNIGISAHIDAGKTTTTERILFYTGVNHKIGEVHDGAATMDWMEQEQERGITITSAATTAFWSGMAKQYEPHRINIIDTPGHVDFTIEVERSMRVLDGAVMVYCAVGGVQPQSETVWRQANKYKVPRIAFVNKMDRMGANFLKVVGQIKTRLGANPVPLQLAIGAEEGFTGVVDLVKMKAINWNDADQGVTFEYEDIPADMQDLANEWHQNLIESAAEASEELMEKYLGGEELTEEEIKQALRQRVLNNEIILVTCGSAFKNKGVQAMLDAVIDYLPSPVDVPAINGILDDGKDTPAERHASDDEPFSALAFKIATDPFVGNLTFFRVYSGVVNSGDTVLNSVKTARERFGRIVQMHANKREEIKEVRAGDIAAAIGLKDVTTGDTLCDPENPIILERMEFPEPVISIAVEPKTKADQEKMGLALGRLAKEDPSFRVWTDEESNQTIIAGMGELHLDIIVDRMKREFNVEANVGKPQVAYREAIRAKVTDIEGKHAKQSGGRGQYGHVVIDMYPLEPGSNPKGYEFINDIKGGVIPGEYIPAVDKGIQEQLKSGPLAGYPVVDLGVRLHFGSYHDVDSSELAFKLAASIAFKEGFKKAKPVLLEPIMKVEVETPEENTGDVIGDLSRRRGMLKGQESEVTGVKIHAEVPLSEMFGYATQLRSLTKGRASYTMEFLKYDDAPNNVAQAVIEARGK</sequence>
<feature type="chain" id="PRO_1000091760" description="Elongation factor G">
    <location>
        <begin position="1"/>
        <end position="704"/>
    </location>
</feature>
<feature type="domain" description="tr-type G">
    <location>
        <begin position="8"/>
        <end position="290"/>
    </location>
</feature>
<feature type="binding site" evidence="1">
    <location>
        <begin position="17"/>
        <end position="24"/>
    </location>
    <ligand>
        <name>GTP</name>
        <dbReference type="ChEBI" id="CHEBI:37565"/>
    </ligand>
</feature>
<feature type="binding site" evidence="1">
    <location>
        <begin position="88"/>
        <end position="92"/>
    </location>
    <ligand>
        <name>GTP</name>
        <dbReference type="ChEBI" id="CHEBI:37565"/>
    </ligand>
</feature>
<feature type="binding site" evidence="1">
    <location>
        <begin position="142"/>
        <end position="145"/>
    </location>
    <ligand>
        <name>GTP</name>
        <dbReference type="ChEBI" id="CHEBI:37565"/>
    </ligand>
</feature>
<accession>B5BGZ2</accession>
<comment type="function">
    <text evidence="1">Catalyzes the GTP-dependent ribosomal translocation step during translation elongation. During this step, the ribosome changes from the pre-translocational (PRE) to the post-translocational (POST) state as the newly formed A-site-bound peptidyl-tRNA and P-site-bound deacylated tRNA move to the P and E sites, respectively. Catalyzes the coordinated movement of the two tRNA molecules, the mRNA and conformational changes in the ribosome.</text>
</comment>
<comment type="subcellular location">
    <subcellularLocation>
        <location evidence="1">Cytoplasm</location>
    </subcellularLocation>
</comment>
<comment type="similarity">
    <text evidence="1">Belongs to the TRAFAC class translation factor GTPase superfamily. Classic translation factor GTPase family. EF-G/EF-2 subfamily.</text>
</comment>
<organism>
    <name type="scientific">Salmonella paratyphi A (strain AKU_12601)</name>
    <dbReference type="NCBI Taxonomy" id="554290"/>
    <lineage>
        <taxon>Bacteria</taxon>
        <taxon>Pseudomonadati</taxon>
        <taxon>Pseudomonadota</taxon>
        <taxon>Gammaproteobacteria</taxon>
        <taxon>Enterobacterales</taxon>
        <taxon>Enterobacteriaceae</taxon>
        <taxon>Salmonella</taxon>
    </lineage>
</organism>
<reference key="1">
    <citation type="journal article" date="2009" name="BMC Genomics">
        <title>Pseudogene accumulation in the evolutionary histories of Salmonella enterica serovars Paratyphi A and Typhi.</title>
        <authorList>
            <person name="Holt K.E."/>
            <person name="Thomson N.R."/>
            <person name="Wain J."/>
            <person name="Langridge G.C."/>
            <person name="Hasan R."/>
            <person name="Bhutta Z.A."/>
            <person name="Quail M.A."/>
            <person name="Norbertczak H."/>
            <person name="Walker D."/>
            <person name="Simmonds M."/>
            <person name="White B."/>
            <person name="Bason N."/>
            <person name="Mungall K."/>
            <person name="Dougan G."/>
            <person name="Parkhill J."/>
        </authorList>
    </citation>
    <scope>NUCLEOTIDE SEQUENCE [LARGE SCALE GENOMIC DNA]</scope>
    <source>
        <strain>AKU_12601</strain>
    </source>
</reference>
<proteinExistence type="inferred from homology"/>
<protein>
    <recommendedName>
        <fullName evidence="1">Elongation factor G</fullName>
        <shortName evidence="1">EF-G</shortName>
    </recommendedName>
</protein>
<gene>
    <name evidence="1" type="primary">fusA</name>
    <name type="ordered locus">SSPA3091</name>
</gene>